<proteinExistence type="inferred from homology"/>
<dbReference type="EC" id="1.13.11.11" evidence="1"/>
<dbReference type="EMBL" id="CP000050">
    <property type="protein sequence ID" value="AAY47528.1"/>
    <property type="molecule type" value="Genomic_DNA"/>
</dbReference>
<dbReference type="RefSeq" id="WP_011035685.1">
    <property type="nucleotide sequence ID" value="NZ_CP155948.1"/>
</dbReference>
<dbReference type="SMR" id="Q4UZJ5"/>
<dbReference type="KEGG" id="xcb:XC_0446"/>
<dbReference type="HOGENOM" id="CLU_063240_0_0_6"/>
<dbReference type="UniPathway" id="UPA00333">
    <property type="reaction ID" value="UER00453"/>
</dbReference>
<dbReference type="Proteomes" id="UP000000420">
    <property type="component" value="Chromosome"/>
</dbReference>
<dbReference type="GO" id="GO:0020037">
    <property type="term" value="F:heme binding"/>
    <property type="evidence" value="ECO:0000250"/>
    <property type="project" value="UniProtKB"/>
</dbReference>
<dbReference type="GO" id="GO:0046872">
    <property type="term" value="F:metal ion binding"/>
    <property type="evidence" value="ECO:0007669"/>
    <property type="project" value="UniProtKB-KW"/>
</dbReference>
<dbReference type="GO" id="GO:0004833">
    <property type="term" value="F:tryptophan 2,3-dioxygenase activity"/>
    <property type="evidence" value="ECO:0000250"/>
    <property type="project" value="UniProtKB"/>
</dbReference>
<dbReference type="GO" id="GO:0019442">
    <property type="term" value="P:L-tryptophan catabolic process to acetyl-CoA"/>
    <property type="evidence" value="ECO:0007669"/>
    <property type="project" value="TreeGrafter"/>
</dbReference>
<dbReference type="GO" id="GO:0019441">
    <property type="term" value="P:L-tryptophan catabolic process to kynurenine"/>
    <property type="evidence" value="ECO:0000250"/>
    <property type="project" value="UniProtKB"/>
</dbReference>
<dbReference type="FunFam" id="1.20.58.480:FF:000001">
    <property type="entry name" value="Tryptophan 2,3-dioxygenase"/>
    <property type="match status" value="1"/>
</dbReference>
<dbReference type="Gene3D" id="1.20.58.480">
    <property type="match status" value="1"/>
</dbReference>
<dbReference type="HAMAP" id="MF_01972">
    <property type="entry name" value="T23O"/>
    <property type="match status" value="1"/>
</dbReference>
<dbReference type="InterPro" id="IPR037217">
    <property type="entry name" value="Trp/Indoleamine_2_3_dOase-like"/>
</dbReference>
<dbReference type="InterPro" id="IPR004981">
    <property type="entry name" value="Trp_2_3_dOase"/>
</dbReference>
<dbReference type="PANTHER" id="PTHR10138">
    <property type="entry name" value="TRYPTOPHAN 2,3-DIOXYGENASE"/>
    <property type="match status" value="1"/>
</dbReference>
<dbReference type="PANTHER" id="PTHR10138:SF0">
    <property type="entry name" value="TRYPTOPHAN 2,3-DIOXYGENASE"/>
    <property type="match status" value="1"/>
</dbReference>
<dbReference type="Pfam" id="PF03301">
    <property type="entry name" value="Trp_dioxygenase"/>
    <property type="match status" value="2"/>
</dbReference>
<dbReference type="SUPFAM" id="SSF140959">
    <property type="entry name" value="Indolic compounds 2,3-dioxygenase-like"/>
    <property type="match status" value="1"/>
</dbReference>
<sequence>MPVDKNLRDLEPGIHTDLEGRLTYGGYLRLDQLLSAQQPLSEPAHHDEMLFIIQHQTSELWLKLLAHELRAAIVHLQRDEVWQCRKVLARSKQVLRQLTEQWSVLETLTPSEYMGFRDVLGPSSGFQSLQYRYIEFLLGNKNPQMLQVFAYDPAGQARLREVLEAPSLYEEFLRYLARFGHAIPQQYQARDWTAAHVADDTLRPVFERIYENTDRYWREYSLCEDLVDVETQFQLWRFRHMRTVMRVIGFKRGTGGSSGVGFLQQALALTFFPELFDVRTSVGVDNRPPQGSADAGKR</sequence>
<protein>
    <recommendedName>
        <fullName evidence="1">Tryptophan 2,3-dioxygenase</fullName>
        <shortName evidence="1">TDO</shortName>
        <ecNumber evidence="1">1.13.11.11</ecNumber>
    </recommendedName>
    <alternativeName>
        <fullName evidence="1">Tryptamin 2,3-dioxygenase</fullName>
    </alternativeName>
    <alternativeName>
        <fullName evidence="1">Tryptophan oxygenase</fullName>
        <shortName evidence="1">TO</shortName>
        <shortName evidence="1">TRPO</shortName>
    </alternativeName>
    <alternativeName>
        <fullName evidence="1">Tryptophan pyrrolase</fullName>
    </alternativeName>
    <alternativeName>
        <fullName evidence="1">Tryptophanase</fullName>
    </alternativeName>
</protein>
<accession>Q4UZJ5</accession>
<organism>
    <name type="scientific">Xanthomonas campestris pv. campestris (strain 8004)</name>
    <dbReference type="NCBI Taxonomy" id="314565"/>
    <lineage>
        <taxon>Bacteria</taxon>
        <taxon>Pseudomonadati</taxon>
        <taxon>Pseudomonadota</taxon>
        <taxon>Gammaproteobacteria</taxon>
        <taxon>Lysobacterales</taxon>
        <taxon>Lysobacteraceae</taxon>
        <taxon>Xanthomonas</taxon>
    </lineage>
</organism>
<gene>
    <name evidence="1" type="primary">kynA</name>
    <name type="ordered locus">XC_0446</name>
</gene>
<feature type="chain" id="PRO_0000360141" description="Tryptophan 2,3-dioxygenase">
    <location>
        <begin position="1"/>
        <end position="298"/>
    </location>
</feature>
<feature type="binding site" evidence="1">
    <location>
        <begin position="51"/>
        <end position="55"/>
    </location>
    <ligand>
        <name>substrate</name>
    </ligand>
</feature>
<feature type="binding site" evidence="1">
    <location>
        <position position="113"/>
    </location>
    <ligand>
        <name>substrate</name>
    </ligand>
</feature>
<feature type="binding site" evidence="1">
    <location>
        <position position="117"/>
    </location>
    <ligand>
        <name>substrate</name>
    </ligand>
</feature>
<feature type="binding site" description="axial binding residue" evidence="1">
    <location>
        <position position="240"/>
    </location>
    <ligand>
        <name>heme</name>
        <dbReference type="ChEBI" id="CHEBI:30413"/>
    </ligand>
    <ligandPart>
        <name>Fe</name>
        <dbReference type="ChEBI" id="CHEBI:18248"/>
    </ligandPart>
</feature>
<feature type="binding site" evidence="1">
    <location>
        <position position="254"/>
    </location>
    <ligand>
        <name>substrate</name>
    </ligand>
</feature>
<reference key="1">
    <citation type="journal article" date="2005" name="Genome Res.">
        <title>Comparative and functional genomic analyses of the pathogenicity of phytopathogen Xanthomonas campestris pv. campestris.</title>
        <authorList>
            <person name="Qian W."/>
            <person name="Jia Y."/>
            <person name="Ren S.-X."/>
            <person name="He Y.-Q."/>
            <person name="Feng J.-X."/>
            <person name="Lu L.-F."/>
            <person name="Sun Q."/>
            <person name="Ying G."/>
            <person name="Tang D.-J."/>
            <person name="Tang H."/>
            <person name="Wu W."/>
            <person name="Hao P."/>
            <person name="Wang L."/>
            <person name="Jiang B.-L."/>
            <person name="Zeng S."/>
            <person name="Gu W.-Y."/>
            <person name="Lu G."/>
            <person name="Rong L."/>
            <person name="Tian Y."/>
            <person name="Yao Z."/>
            <person name="Fu G."/>
            <person name="Chen B."/>
            <person name="Fang R."/>
            <person name="Qiang B."/>
            <person name="Chen Z."/>
            <person name="Zhao G.-P."/>
            <person name="Tang J.-L."/>
            <person name="He C."/>
        </authorList>
    </citation>
    <scope>NUCLEOTIDE SEQUENCE [LARGE SCALE GENOMIC DNA]</scope>
    <source>
        <strain>8004</strain>
    </source>
</reference>
<name>T23O_XANC8</name>
<evidence type="ECO:0000255" key="1">
    <source>
        <dbReference type="HAMAP-Rule" id="MF_01972"/>
    </source>
</evidence>
<comment type="function">
    <text evidence="1">Heme-dependent dioxygenase that catalyzes the oxidative cleavage of the L-tryptophan (L-Trp) pyrrole ring and converts L-tryptophan to N-formyl-L-kynurenine. Catalyzes the oxidative cleavage of the indole moiety.</text>
</comment>
<comment type="catalytic activity">
    <reaction evidence="1">
        <text>L-tryptophan + O2 = N-formyl-L-kynurenine</text>
        <dbReference type="Rhea" id="RHEA:24536"/>
        <dbReference type="ChEBI" id="CHEBI:15379"/>
        <dbReference type="ChEBI" id="CHEBI:57912"/>
        <dbReference type="ChEBI" id="CHEBI:58629"/>
        <dbReference type="EC" id="1.13.11.11"/>
    </reaction>
</comment>
<comment type="cofactor">
    <cofactor evidence="1">
        <name>heme</name>
        <dbReference type="ChEBI" id="CHEBI:30413"/>
    </cofactor>
    <text evidence="1">Binds 1 heme group per subunit.</text>
</comment>
<comment type="pathway">
    <text evidence="1">Amino-acid degradation; L-tryptophan degradation via kynurenine pathway; L-kynurenine from L-tryptophan: step 1/2.</text>
</comment>
<comment type="subunit">
    <text evidence="1">Homotetramer.</text>
</comment>
<comment type="similarity">
    <text evidence="1">Belongs to the tryptophan 2,3-dioxygenase family.</text>
</comment>
<keyword id="KW-0223">Dioxygenase</keyword>
<keyword id="KW-0349">Heme</keyword>
<keyword id="KW-0408">Iron</keyword>
<keyword id="KW-0479">Metal-binding</keyword>
<keyword id="KW-0560">Oxidoreductase</keyword>
<keyword id="KW-0823">Tryptophan catabolism</keyword>